<feature type="chain" id="PRO_1000117832" description="Phosphoribosylaminoimidazole-succinocarboxamide synthase">
    <location>
        <begin position="1"/>
        <end position="237"/>
    </location>
</feature>
<gene>
    <name evidence="1" type="primary">purC</name>
    <name type="ordered locus">ECIAI39_2615</name>
</gene>
<keyword id="KW-0067">ATP-binding</keyword>
<keyword id="KW-0436">Ligase</keyword>
<keyword id="KW-0547">Nucleotide-binding</keyword>
<keyword id="KW-0658">Purine biosynthesis</keyword>
<proteinExistence type="inferred from homology"/>
<sequence length="237" mass="27025">MQKQAELYRGKAKTVYSTENPDLLVLEFRNDTSAGDGARIEQFDRKGMVNNKFNYFIMSKLAEAGIPTQMERLLSDTECLVKKLDMVPVECVVRNRTAGSLVKRLGIEEGIELNPPLFDLFLKNDAMHDPMVNESYCETFGWVSKENLARMKELTYKANDVLKKLFDDAGLILVDFKLEFGLYKGEVVLGDEFSPDGSRLWDKETLEKMDKDRFRQSLGGLIEAYEAVARRLGVQLD</sequence>
<evidence type="ECO:0000255" key="1">
    <source>
        <dbReference type="HAMAP-Rule" id="MF_00137"/>
    </source>
</evidence>
<reference key="1">
    <citation type="journal article" date="2009" name="PLoS Genet.">
        <title>Organised genome dynamics in the Escherichia coli species results in highly diverse adaptive paths.</title>
        <authorList>
            <person name="Touchon M."/>
            <person name="Hoede C."/>
            <person name="Tenaillon O."/>
            <person name="Barbe V."/>
            <person name="Baeriswyl S."/>
            <person name="Bidet P."/>
            <person name="Bingen E."/>
            <person name="Bonacorsi S."/>
            <person name="Bouchier C."/>
            <person name="Bouvet O."/>
            <person name="Calteau A."/>
            <person name="Chiapello H."/>
            <person name="Clermont O."/>
            <person name="Cruveiller S."/>
            <person name="Danchin A."/>
            <person name="Diard M."/>
            <person name="Dossat C."/>
            <person name="Karoui M.E."/>
            <person name="Frapy E."/>
            <person name="Garry L."/>
            <person name="Ghigo J.M."/>
            <person name="Gilles A.M."/>
            <person name="Johnson J."/>
            <person name="Le Bouguenec C."/>
            <person name="Lescat M."/>
            <person name="Mangenot S."/>
            <person name="Martinez-Jehanne V."/>
            <person name="Matic I."/>
            <person name="Nassif X."/>
            <person name="Oztas S."/>
            <person name="Petit M.A."/>
            <person name="Pichon C."/>
            <person name="Rouy Z."/>
            <person name="Ruf C.S."/>
            <person name="Schneider D."/>
            <person name="Tourret J."/>
            <person name="Vacherie B."/>
            <person name="Vallenet D."/>
            <person name="Medigue C."/>
            <person name="Rocha E.P.C."/>
            <person name="Denamur E."/>
        </authorList>
    </citation>
    <scope>NUCLEOTIDE SEQUENCE [LARGE SCALE GENOMIC DNA]</scope>
    <source>
        <strain>IAI39 / ExPEC</strain>
    </source>
</reference>
<accession>B7NQL4</accession>
<dbReference type="EC" id="6.3.2.6" evidence="1"/>
<dbReference type="EMBL" id="CU928164">
    <property type="protein sequence ID" value="CAR18739.1"/>
    <property type="molecule type" value="Genomic_DNA"/>
</dbReference>
<dbReference type="RefSeq" id="WP_012602432.1">
    <property type="nucleotide sequence ID" value="NC_011750.1"/>
</dbReference>
<dbReference type="RefSeq" id="YP_002408563.1">
    <property type="nucleotide sequence ID" value="NC_011750.1"/>
</dbReference>
<dbReference type="SMR" id="B7NQL4"/>
<dbReference type="STRING" id="585057.ECIAI39_2615"/>
<dbReference type="KEGG" id="ect:ECIAI39_2615"/>
<dbReference type="PATRIC" id="fig|585057.6.peg.2720"/>
<dbReference type="HOGENOM" id="CLU_061495_2_1_6"/>
<dbReference type="UniPathway" id="UPA00074">
    <property type="reaction ID" value="UER00131"/>
</dbReference>
<dbReference type="Proteomes" id="UP000000749">
    <property type="component" value="Chromosome"/>
</dbReference>
<dbReference type="GO" id="GO:0005829">
    <property type="term" value="C:cytosol"/>
    <property type="evidence" value="ECO:0007669"/>
    <property type="project" value="TreeGrafter"/>
</dbReference>
<dbReference type="GO" id="GO:0005524">
    <property type="term" value="F:ATP binding"/>
    <property type="evidence" value="ECO:0007669"/>
    <property type="project" value="UniProtKB-KW"/>
</dbReference>
<dbReference type="GO" id="GO:0004639">
    <property type="term" value="F:phosphoribosylaminoimidazolesuccinocarboxamide synthase activity"/>
    <property type="evidence" value="ECO:0007669"/>
    <property type="project" value="UniProtKB-UniRule"/>
</dbReference>
<dbReference type="GO" id="GO:0006189">
    <property type="term" value="P:'de novo' IMP biosynthetic process"/>
    <property type="evidence" value="ECO:0007669"/>
    <property type="project" value="UniProtKB-UniRule"/>
</dbReference>
<dbReference type="GO" id="GO:0009236">
    <property type="term" value="P:cobalamin biosynthetic process"/>
    <property type="evidence" value="ECO:0007669"/>
    <property type="project" value="InterPro"/>
</dbReference>
<dbReference type="CDD" id="cd01415">
    <property type="entry name" value="SAICAR_synt_PurC"/>
    <property type="match status" value="1"/>
</dbReference>
<dbReference type="FunFam" id="3.30.200.20:FF:000086">
    <property type="entry name" value="Phosphoribosylaminoimidazole-succinocarboxamide synthase"/>
    <property type="match status" value="1"/>
</dbReference>
<dbReference type="FunFam" id="3.30.470.20:FF:000006">
    <property type="entry name" value="Phosphoribosylaminoimidazole-succinocarboxamide synthase"/>
    <property type="match status" value="1"/>
</dbReference>
<dbReference type="Gene3D" id="3.30.470.20">
    <property type="entry name" value="ATP-grasp fold, B domain"/>
    <property type="match status" value="1"/>
</dbReference>
<dbReference type="Gene3D" id="3.30.200.20">
    <property type="entry name" value="Phosphorylase Kinase, domain 1"/>
    <property type="match status" value="1"/>
</dbReference>
<dbReference type="HAMAP" id="MF_00137">
    <property type="entry name" value="SAICAR_synth"/>
    <property type="match status" value="1"/>
</dbReference>
<dbReference type="InterPro" id="IPR028923">
    <property type="entry name" value="SAICAR_synt/ADE2_N"/>
</dbReference>
<dbReference type="InterPro" id="IPR033934">
    <property type="entry name" value="SAICAR_synt_PurC"/>
</dbReference>
<dbReference type="InterPro" id="IPR001636">
    <property type="entry name" value="SAICAR_synth"/>
</dbReference>
<dbReference type="InterPro" id="IPR050089">
    <property type="entry name" value="SAICAR_synthetase"/>
</dbReference>
<dbReference type="InterPro" id="IPR018236">
    <property type="entry name" value="SAICAR_synthetase_CS"/>
</dbReference>
<dbReference type="NCBIfam" id="TIGR00081">
    <property type="entry name" value="purC"/>
    <property type="match status" value="1"/>
</dbReference>
<dbReference type="PANTHER" id="PTHR43599">
    <property type="entry name" value="MULTIFUNCTIONAL PROTEIN ADE2"/>
    <property type="match status" value="1"/>
</dbReference>
<dbReference type="PANTHER" id="PTHR43599:SF3">
    <property type="entry name" value="SI:DKEY-6E2.2"/>
    <property type="match status" value="1"/>
</dbReference>
<dbReference type="Pfam" id="PF01259">
    <property type="entry name" value="SAICAR_synt"/>
    <property type="match status" value="1"/>
</dbReference>
<dbReference type="SUPFAM" id="SSF56104">
    <property type="entry name" value="SAICAR synthase-like"/>
    <property type="match status" value="1"/>
</dbReference>
<dbReference type="PROSITE" id="PS01057">
    <property type="entry name" value="SAICAR_SYNTHETASE_1"/>
    <property type="match status" value="1"/>
</dbReference>
<dbReference type="PROSITE" id="PS01058">
    <property type="entry name" value="SAICAR_SYNTHETASE_2"/>
    <property type="match status" value="1"/>
</dbReference>
<comment type="catalytic activity">
    <reaction evidence="1">
        <text>5-amino-1-(5-phospho-D-ribosyl)imidazole-4-carboxylate + L-aspartate + ATP = (2S)-2-[5-amino-1-(5-phospho-beta-D-ribosyl)imidazole-4-carboxamido]succinate + ADP + phosphate + 2 H(+)</text>
        <dbReference type="Rhea" id="RHEA:22628"/>
        <dbReference type="ChEBI" id="CHEBI:15378"/>
        <dbReference type="ChEBI" id="CHEBI:29991"/>
        <dbReference type="ChEBI" id="CHEBI:30616"/>
        <dbReference type="ChEBI" id="CHEBI:43474"/>
        <dbReference type="ChEBI" id="CHEBI:58443"/>
        <dbReference type="ChEBI" id="CHEBI:77657"/>
        <dbReference type="ChEBI" id="CHEBI:456216"/>
        <dbReference type="EC" id="6.3.2.6"/>
    </reaction>
</comment>
<comment type="pathway">
    <text evidence="1">Purine metabolism; IMP biosynthesis via de novo pathway; 5-amino-1-(5-phospho-D-ribosyl)imidazole-4-carboxamide from 5-amino-1-(5-phospho-D-ribosyl)imidazole-4-carboxylate: step 1/2.</text>
</comment>
<comment type="similarity">
    <text evidence="1">Belongs to the SAICAR synthetase family.</text>
</comment>
<name>PUR7_ECO7I</name>
<organism>
    <name type="scientific">Escherichia coli O7:K1 (strain IAI39 / ExPEC)</name>
    <dbReference type="NCBI Taxonomy" id="585057"/>
    <lineage>
        <taxon>Bacteria</taxon>
        <taxon>Pseudomonadati</taxon>
        <taxon>Pseudomonadota</taxon>
        <taxon>Gammaproteobacteria</taxon>
        <taxon>Enterobacterales</taxon>
        <taxon>Enterobacteriaceae</taxon>
        <taxon>Escherichia</taxon>
    </lineage>
</organism>
<protein>
    <recommendedName>
        <fullName evidence="1">Phosphoribosylaminoimidazole-succinocarboxamide synthase</fullName>
        <ecNumber evidence="1">6.3.2.6</ecNumber>
    </recommendedName>
    <alternativeName>
        <fullName evidence="1">SAICAR synthetase</fullName>
    </alternativeName>
</protein>